<reference key="1">
    <citation type="submission" date="2006-12" db="EMBL/GenBank/DDBJ databases">
        <title>Bifidobacterium adolescentis complete genome sequence.</title>
        <authorList>
            <person name="Suzuki T."/>
            <person name="Tsuda Y."/>
            <person name="Kanou N."/>
            <person name="Inoue T."/>
            <person name="Kumazaki K."/>
            <person name="Nagano S."/>
            <person name="Hirai S."/>
            <person name="Tanaka K."/>
            <person name="Watanabe K."/>
        </authorList>
    </citation>
    <scope>NUCLEOTIDE SEQUENCE [LARGE SCALE GENOMIC DNA]</scope>
    <source>
        <strain>ATCC 15703 / DSM 20083 / NCTC 11814 / E194a</strain>
    </source>
</reference>
<proteinExistence type="inferred from homology"/>
<keyword id="KW-0963">Cytoplasm</keyword>
<keyword id="KW-0275">Fatty acid biosynthesis</keyword>
<keyword id="KW-0276">Fatty acid metabolism</keyword>
<keyword id="KW-0444">Lipid biosynthesis</keyword>
<keyword id="KW-0443">Lipid metabolism</keyword>
<keyword id="KW-0460">Magnesium</keyword>
<keyword id="KW-0479">Metal-binding</keyword>
<keyword id="KW-1185">Reference proteome</keyword>
<keyword id="KW-0808">Transferase</keyword>
<feature type="chain" id="PRO_1000008389" description="Holo-[acyl-carrier-protein] synthase">
    <location>
        <begin position="1"/>
        <end position="152"/>
    </location>
</feature>
<feature type="binding site" evidence="1">
    <location>
        <position position="7"/>
    </location>
    <ligand>
        <name>Mg(2+)</name>
        <dbReference type="ChEBI" id="CHEBI:18420"/>
    </ligand>
</feature>
<feature type="binding site" evidence="1">
    <location>
        <position position="60"/>
    </location>
    <ligand>
        <name>Mg(2+)</name>
        <dbReference type="ChEBI" id="CHEBI:18420"/>
    </ligand>
</feature>
<dbReference type="EC" id="2.7.8.7" evidence="1"/>
<dbReference type="EMBL" id="AP009256">
    <property type="protein sequence ID" value="BAF39038.1"/>
    <property type="molecule type" value="Genomic_DNA"/>
</dbReference>
<dbReference type="RefSeq" id="WP_011742774.1">
    <property type="nucleotide sequence ID" value="NC_008618.1"/>
</dbReference>
<dbReference type="SMR" id="A1A005"/>
<dbReference type="STRING" id="367928.BAD_0257"/>
<dbReference type="PaxDb" id="1680-BADO_0265"/>
<dbReference type="GeneID" id="4556911"/>
<dbReference type="KEGG" id="bad:BAD_0257"/>
<dbReference type="HOGENOM" id="CLU_089696_2_0_11"/>
<dbReference type="Proteomes" id="UP000008702">
    <property type="component" value="Chromosome"/>
</dbReference>
<dbReference type="GO" id="GO:0005737">
    <property type="term" value="C:cytoplasm"/>
    <property type="evidence" value="ECO:0007669"/>
    <property type="project" value="UniProtKB-SubCell"/>
</dbReference>
<dbReference type="GO" id="GO:0008897">
    <property type="term" value="F:holo-[acyl-carrier-protein] synthase activity"/>
    <property type="evidence" value="ECO:0007669"/>
    <property type="project" value="UniProtKB-UniRule"/>
</dbReference>
<dbReference type="GO" id="GO:0000287">
    <property type="term" value="F:magnesium ion binding"/>
    <property type="evidence" value="ECO:0007669"/>
    <property type="project" value="UniProtKB-UniRule"/>
</dbReference>
<dbReference type="GO" id="GO:0006633">
    <property type="term" value="P:fatty acid biosynthetic process"/>
    <property type="evidence" value="ECO:0007669"/>
    <property type="project" value="UniProtKB-UniRule"/>
</dbReference>
<dbReference type="Gene3D" id="3.90.470.20">
    <property type="entry name" value="4'-phosphopantetheinyl transferase domain"/>
    <property type="match status" value="1"/>
</dbReference>
<dbReference type="HAMAP" id="MF_00101">
    <property type="entry name" value="AcpS"/>
    <property type="match status" value="1"/>
</dbReference>
<dbReference type="InterPro" id="IPR008278">
    <property type="entry name" value="4-PPantetheinyl_Trfase_dom"/>
</dbReference>
<dbReference type="InterPro" id="IPR037143">
    <property type="entry name" value="4-PPantetheinyl_Trfase_dom_sf"/>
</dbReference>
<dbReference type="InterPro" id="IPR002582">
    <property type="entry name" value="ACPS"/>
</dbReference>
<dbReference type="InterPro" id="IPR004568">
    <property type="entry name" value="Ppantetheine-prot_Trfase_dom"/>
</dbReference>
<dbReference type="NCBIfam" id="TIGR00556">
    <property type="entry name" value="pantethn_trn"/>
    <property type="match status" value="1"/>
</dbReference>
<dbReference type="Pfam" id="PF01648">
    <property type="entry name" value="ACPS"/>
    <property type="match status" value="1"/>
</dbReference>
<dbReference type="SUPFAM" id="SSF56214">
    <property type="entry name" value="4'-phosphopantetheinyl transferase"/>
    <property type="match status" value="1"/>
</dbReference>
<evidence type="ECO:0000255" key="1">
    <source>
        <dbReference type="HAMAP-Rule" id="MF_00101"/>
    </source>
</evidence>
<accession>A1A005</accession>
<comment type="function">
    <text evidence="1">Transfers the 4'-phosphopantetheine moiety from coenzyme A to a Ser of acyl-carrier-protein.</text>
</comment>
<comment type="catalytic activity">
    <reaction evidence="1">
        <text>apo-[ACP] + CoA = holo-[ACP] + adenosine 3',5'-bisphosphate + H(+)</text>
        <dbReference type="Rhea" id="RHEA:12068"/>
        <dbReference type="Rhea" id="RHEA-COMP:9685"/>
        <dbReference type="Rhea" id="RHEA-COMP:9690"/>
        <dbReference type="ChEBI" id="CHEBI:15378"/>
        <dbReference type="ChEBI" id="CHEBI:29999"/>
        <dbReference type="ChEBI" id="CHEBI:57287"/>
        <dbReference type="ChEBI" id="CHEBI:58343"/>
        <dbReference type="ChEBI" id="CHEBI:64479"/>
        <dbReference type="EC" id="2.7.8.7"/>
    </reaction>
</comment>
<comment type="cofactor">
    <cofactor evidence="1">
        <name>Mg(2+)</name>
        <dbReference type="ChEBI" id="CHEBI:18420"/>
    </cofactor>
</comment>
<comment type="subcellular location">
    <subcellularLocation>
        <location evidence="1">Cytoplasm</location>
    </subcellularLocation>
</comment>
<comment type="similarity">
    <text evidence="1">Belongs to the P-Pant transferase superfamily. AcpS family.</text>
</comment>
<name>ACPS_BIFAA</name>
<protein>
    <recommendedName>
        <fullName evidence="1">Holo-[acyl-carrier-protein] synthase</fullName>
        <shortName evidence="1">Holo-ACP synthase</shortName>
        <ecNumber evidence="1">2.7.8.7</ecNumber>
    </recommendedName>
    <alternativeName>
        <fullName evidence="1">4'-phosphopantetheinyl transferase AcpS</fullName>
    </alternativeName>
</protein>
<sequence>MLGLGHDVVDVPAFAKQLNEPGTRMRNLFSMREIWQTAQRSQLKHDDEAVHLAARWAGKEAFLKAWCAAISRHAKDGAEVAYPYTLDNFPWVRIEILDDSHGVPRVILSSEVQRKVQQSLGLPLDPVCQSYDISISISHDGPIASAVVMLEI</sequence>
<organism>
    <name type="scientific">Bifidobacterium adolescentis (strain ATCC 15703 / DSM 20083 / NCTC 11814 / E194a)</name>
    <dbReference type="NCBI Taxonomy" id="367928"/>
    <lineage>
        <taxon>Bacteria</taxon>
        <taxon>Bacillati</taxon>
        <taxon>Actinomycetota</taxon>
        <taxon>Actinomycetes</taxon>
        <taxon>Bifidobacteriales</taxon>
        <taxon>Bifidobacteriaceae</taxon>
        <taxon>Bifidobacterium</taxon>
    </lineage>
</organism>
<gene>
    <name evidence="1" type="primary">acpS</name>
    <name type="ordered locus">BAD_0257</name>
</gene>